<protein>
    <recommendedName>
        <fullName evidence="1">Glutamyl-tRNA reductase</fullName>
        <shortName evidence="1">GluTR</shortName>
        <ecNumber evidence="1">1.2.1.70</ecNumber>
    </recommendedName>
</protein>
<gene>
    <name evidence="1" type="primary">hemA</name>
    <name type="ordered locus">DvMF_0296</name>
</gene>
<dbReference type="EC" id="1.2.1.70" evidence="1"/>
<dbReference type="EMBL" id="AB045134">
    <property type="protein sequence ID" value="BAA97586.2"/>
    <property type="status" value="ALT_INIT"/>
    <property type="molecule type" value="Genomic_DNA"/>
</dbReference>
<dbReference type="EMBL" id="CP001197">
    <property type="protein sequence ID" value="ACL07253.1"/>
    <property type="molecule type" value="Genomic_DNA"/>
</dbReference>
<dbReference type="SMR" id="Q9KW52"/>
<dbReference type="STRING" id="883.DvMF_0296"/>
<dbReference type="KEGG" id="dvm:DvMF_0296"/>
<dbReference type="eggNOG" id="COG0373">
    <property type="taxonomic scope" value="Bacteria"/>
</dbReference>
<dbReference type="HOGENOM" id="CLU_035113_2_2_7"/>
<dbReference type="OrthoDB" id="110209at2"/>
<dbReference type="UniPathway" id="UPA00251">
    <property type="reaction ID" value="UER00316"/>
</dbReference>
<dbReference type="GO" id="GO:0008883">
    <property type="term" value="F:glutamyl-tRNA reductase activity"/>
    <property type="evidence" value="ECO:0007669"/>
    <property type="project" value="UniProtKB-UniRule"/>
</dbReference>
<dbReference type="GO" id="GO:0050661">
    <property type="term" value="F:NADP binding"/>
    <property type="evidence" value="ECO:0007669"/>
    <property type="project" value="InterPro"/>
</dbReference>
<dbReference type="GO" id="GO:0019353">
    <property type="term" value="P:protoporphyrinogen IX biosynthetic process from glutamate"/>
    <property type="evidence" value="ECO:0007669"/>
    <property type="project" value="TreeGrafter"/>
</dbReference>
<dbReference type="CDD" id="cd05213">
    <property type="entry name" value="NAD_bind_Glutamyl_tRNA_reduct"/>
    <property type="match status" value="1"/>
</dbReference>
<dbReference type="FunFam" id="3.30.460.30:FF:000001">
    <property type="entry name" value="Glutamyl-tRNA reductase"/>
    <property type="match status" value="1"/>
</dbReference>
<dbReference type="FunFam" id="3.40.50.720:FF:000031">
    <property type="entry name" value="Glutamyl-tRNA reductase"/>
    <property type="match status" value="1"/>
</dbReference>
<dbReference type="Gene3D" id="3.30.460.30">
    <property type="entry name" value="Glutamyl-tRNA reductase, N-terminal domain"/>
    <property type="match status" value="1"/>
</dbReference>
<dbReference type="Gene3D" id="3.40.50.720">
    <property type="entry name" value="NAD(P)-binding Rossmann-like Domain"/>
    <property type="match status" value="1"/>
</dbReference>
<dbReference type="HAMAP" id="MF_00087">
    <property type="entry name" value="Glu_tRNA_reductase"/>
    <property type="match status" value="1"/>
</dbReference>
<dbReference type="InterPro" id="IPR000343">
    <property type="entry name" value="4pyrrol_synth_GluRdtase"/>
</dbReference>
<dbReference type="InterPro" id="IPR015896">
    <property type="entry name" value="4pyrrol_synth_GluRdtase_dimer"/>
</dbReference>
<dbReference type="InterPro" id="IPR015895">
    <property type="entry name" value="4pyrrol_synth_GluRdtase_N"/>
</dbReference>
<dbReference type="InterPro" id="IPR018214">
    <property type="entry name" value="GluRdtase_CS"/>
</dbReference>
<dbReference type="InterPro" id="IPR036453">
    <property type="entry name" value="GluRdtase_dimer_dom_sf"/>
</dbReference>
<dbReference type="InterPro" id="IPR036343">
    <property type="entry name" value="GluRdtase_N_sf"/>
</dbReference>
<dbReference type="InterPro" id="IPR036291">
    <property type="entry name" value="NAD(P)-bd_dom_sf"/>
</dbReference>
<dbReference type="InterPro" id="IPR006151">
    <property type="entry name" value="Shikm_DH/Glu-tRNA_Rdtase"/>
</dbReference>
<dbReference type="NCBIfam" id="TIGR01035">
    <property type="entry name" value="hemA"/>
    <property type="match status" value="1"/>
</dbReference>
<dbReference type="PANTHER" id="PTHR43013">
    <property type="entry name" value="GLUTAMYL-TRNA REDUCTASE"/>
    <property type="match status" value="1"/>
</dbReference>
<dbReference type="PANTHER" id="PTHR43013:SF1">
    <property type="entry name" value="GLUTAMYL-TRNA REDUCTASE"/>
    <property type="match status" value="1"/>
</dbReference>
<dbReference type="Pfam" id="PF00745">
    <property type="entry name" value="GlutR_dimer"/>
    <property type="match status" value="1"/>
</dbReference>
<dbReference type="Pfam" id="PF05201">
    <property type="entry name" value="GlutR_N"/>
    <property type="match status" value="1"/>
</dbReference>
<dbReference type="Pfam" id="PF01488">
    <property type="entry name" value="Shikimate_DH"/>
    <property type="match status" value="1"/>
</dbReference>
<dbReference type="PIRSF" id="PIRSF000445">
    <property type="entry name" value="4pyrrol_synth_GluRdtase"/>
    <property type="match status" value="1"/>
</dbReference>
<dbReference type="SUPFAM" id="SSF69742">
    <property type="entry name" value="Glutamyl tRNA-reductase catalytic, N-terminal domain"/>
    <property type="match status" value="1"/>
</dbReference>
<dbReference type="SUPFAM" id="SSF69075">
    <property type="entry name" value="Glutamyl tRNA-reductase dimerization domain"/>
    <property type="match status" value="1"/>
</dbReference>
<dbReference type="SUPFAM" id="SSF51735">
    <property type="entry name" value="NAD(P)-binding Rossmann-fold domains"/>
    <property type="match status" value="1"/>
</dbReference>
<dbReference type="PROSITE" id="PS00747">
    <property type="entry name" value="GLUTR"/>
    <property type="match status" value="1"/>
</dbReference>
<comment type="function">
    <text evidence="1">Catalyzes the NADPH-dependent reduction of glutamyl-tRNA(Glu) to glutamate 1-semialdehyde (GSA).</text>
</comment>
<comment type="catalytic activity">
    <reaction evidence="1">
        <text>(S)-4-amino-5-oxopentanoate + tRNA(Glu) + NADP(+) = L-glutamyl-tRNA(Glu) + NADPH + H(+)</text>
        <dbReference type="Rhea" id="RHEA:12344"/>
        <dbReference type="Rhea" id="RHEA-COMP:9663"/>
        <dbReference type="Rhea" id="RHEA-COMP:9680"/>
        <dbReference type="ChEBI" id="CHEBI:15378"/>
        <dbReference type="ChEBI" id="CHEBI:57501"/>
        <dbReference type="ChEBI" id="CHEBI:57783"/>
        <dbReference type="ChEBI" id="CHEBI:58349"/>
        <dbReference type="ChEBI" id="CHEBI:78442"/>
        <dbReference type="ChEBI" id="CHEBI:78520"/>
        <dbReference type="EC" id="1.2.1.70"/>
    </reaction>
</comment>
<comment type="pathway">
    <text evidence="1">Porphyrin-containing compound metabolism; protoporphyrin-IX biosynthesis; 5-aminolevulinate from L-glutamyl-tRNA(Glu): step 1/2.</text>
</comment>
<comment type="subunit">
    <text evidence="1">Homodimer.</text>
</comment>
<comment type="domain">
    <text evidence="1">Possesses an unusual extended V-shaped dimeric structure with each monomer consisting of three distinct domains arranged along a curved 'spinal' alpha-helix. The N-terminal catalytic domain specifically recognizes the glutamate moiety of the substrate. The second domain is the NADPH-binding domain, and the third C-terminal domain is responsible for dimerization.</text>
</comment>
<comment type="miscellaneous">
    <text evidence="1">During catalysis, the active site Cys acts as a nucleophile attacking the alpha-carbonyl group of tRNA-bound glutamate with the formation of a thioester intermediate between enzyme and glutamate, and the concomitant release of tRNA(Glu). The thioester intermediate is finally reduced by direct hydride transfer from NADPH, to form the product GSA.</text>
</comment>
<comment type="similarity">
    <text evidence="1">Belongs to the glutamyl-tRNA reductase family.</text>
</comment>
<comment type="sequence caution" evidence="2">
    <conflict type="erroneous initiation">
        <sequence resource="EMBL-CDS" id="BAA97586"/>
    </conflict>
</comment>
<keyword id="KW-0521">NADP</keyword>
<keyword id="KW-0560">Oxidoreductase</keyword>
<keyword id="KW-0627">Porphyrin biosynthesis</keyword>
<reference key="1">
    <citation type="submission" date="2000-06" db="EMBL/GenBank/DDBJ databases">
        <title>Glutamyl-tRNA reductase from Desulfovibrio vulgaris Miyazaki F.</title>
        <authorList>
            <person name="Ozawa K."/>
            <person name="Tachibana H."/>
        </authorList>
    </citation>
    <scope>NUCLEOTIDE SEQUENCE [GENOMIC DNA]</scope>
</reference>
<reference key="2">
    <citation type="submission" date="2008-10" db="EMBL/GenBank/DDBJ databases">
        <title>Complete sequence of Desulfovibrio vulgaris str. 'Miyazaki F'.</title>
        <authorList>
            <person name="Lucas S."/>
            <person name="Copeland A."/>
            <person name="Lapidus A."/>
            <person name="Glavina del Rio T."/>
            <person name="Dalin E."/>
            <person name="Tice H."/>
            <person name="Bruce D."/>
            <person name="Goodwin L."/>
            <person name="Pitluck S."/>
            <person name="Sims D."/>
            <person name="Brettin T."/>
            <person name="Detter J.C."/>
            <person name="Han C."/>
            <person name="Larimer F."/>
            <person name="Land M."/>
            <person name="Hauser L."/>
            <person name="Kyrpides N."/>
            <person name="Mikhailova N."/>
            <person name="Hazen T.C."/>
            <person name="Richardson P."/>
        </authorList>
    </citation>
    <scope>NUCLEOTIDE SEQUENCE [LARGE SCALE GENOMIC DNA]</scope>
    <source>
        <strain>DSM 19637 / Miyazaki F</strain>
    </source>
</reference>
<name>HEM1_NITV9</name>
<accession>Q9KW52</accession>
<accession>B8DPG6</accession>
<organism>
    <name type="scientific">Nitratidesulfovibrio vulgaris (strain DSM 19637 / Miyazaki F)</name>
    <name type="common">Desulfovibrio vulgaris</name>
    <dbReference type="NCBI Taxonomy" id="883"/>
    <lineage>
        <taxon>Bacteria</taxon>
        <taxon>Pseudomonadati</taxon>
        <taxon>Thermodesulfobacteriota</taxon>
        <taxon>Desulfovibrionia</taxon>
        <taxon>Desulfovibrionales</taxon>
        <taxon>Desulfovibrionaceae</taxon>
        <taxon>Nitratidesulfovibrio</taxon>
    </lineage>
</organism>
<sequence length="442" mass="49592">MDQEIYLIGLNHRTASVEVRERFALTDCTVLEQGVVPTGDDISEVVILSTCNRVEIMAVGNGPGVPARVLDCWAAARGQKRSDLEPFVYVHKGIDAVRHLFSVASSLDSMVVGEPQILGQLKDAYRKAVGRNATRVVLNRLLHKAFSVAKRVRTETGVASSAVSISYAAVELAKRIFGEMSQYKAMLIGAGEMAELAATHLLNSGIREIMVANRTFERGLQLARQFKGEAVLFQDLSVRLAEADIIISSTGAHEPIIRARDIKDVLKRRKNRPMFFIDIAVPRDIDPDVNNLDNVYLYDIDDLKEVVEENMAQRRDEAAKARSIVEEEAGNFAKWLKSLDLQPTIVDLLRRSERIAQDELARTLKRLGPVDDATREALQAMLCAIVKKVNHEPITFLKRRFDEEEAGTRYIDITRRMFNLDCDDVPDDAHSDRKHTQQRDDA</sequence>
<proteinExistence type="inferred from homology"/>
<evidence type="ECO:0000255" key="1">
    <source>
        <dbReference type="HAMAP-Rule" id="MF_00087"/>
    </source>
</evidence>
<evidence type="ECO:0000305" key="2"/>
<feature type="chain" id="PRO_0000114022" description="Glutamyl-tRNA reductase">
    <location>
        <begin position="1"/>
        <end position="442"/>
    </location>
</feature>
<feature type="active site" description="Nucleophile" evidence="1">
    <location>
        <position position="51"/>
    </location>
</feature>
<feature type="binding site" evidence="1">
    <location>
        <begin position="50"/>
        <end position="53"/>
    </location>
    <ligand>
        <name>substrate</name>
    </ligand>
</feature>
<feature type="binding site" evidence="1">
    <location>
        <position position="109"/>
    </location>
    <ligand>
        <name>substrate</name>
    </ligand>
</feature>
<feature type="binding site" evidence="1">
    <location>
        <begin position="114"/>
        <end position="116"/>
    </location>
    <ligand>
        <name>substrate</name>
    </ligand>
</feature>
<feature type="binding site" evidence="1">
    <location>
        <position position="120"/>
    </location>
    <ligand>
        <name>substrate</name>
    </ligand>
</feature>
<feature type="binding site" evidence="1">
    <location>
        <begin position="189"/>
        <end position="194"/>
    </location>
    <ligand>
        <name>NADP(+)</name>
        <dbReference type="ChEBI" id="CHEBI:58349"/>
    </ligand>
</feature>
<feature type="site" description="Important for activity" evidence="1">
    <location>
        <position position="99"/>
    </location>
</feature>
<feature type="sequence conflict" description="In Ref. 1; BAA97586." evidence="2" ref="1">
    <original>M</original>
    <variation>G</variation>
    <location>
        <position position="1"/>
    </location>
</feature>